<sequence>MTKFIFVTGGVVSSLGKGITASSLGRLLKDRGLNVTIQKFDPYLNVDPGTMSPYQHGEVFVTDDGAETDLDLGHYERFIDINLNKFSNVTAGKVYSHVLKKERRGDYLGGTVQVIPHITNEIKERLLLAGESTNADVVITEIGGTTGDIESLPFIEAIRQIRSDLGRENVMYVHCTLLPYIKAAGEMKTKPTQHSVKELRGLGIQPDLIVVRTEYEMTQDLKDKIALFCDINKESVIECRDADSLYEIPLQLSQQNMDDIVIKRLQLNAKYETQLDEWKQLLDIVNNLDGKITIGLVGKYVSLQDAYLSVVESLKHAGYPFAKDIDIRWIDSSEVTDENAAEYLADVDGILVPGGFGFRASEGKISAIKYARENNVPFFGICLGMQLATVEFSRNVLGLEGAHSAELDPATPYPIIDLLPEQKDIEDLGGTLRLGLYPCSIKEGTLAQDVYGKAEIEERHRHRYEFNNDYREQLEANGMVISGTSPDGRLVEMVEIPTNDFFIACQFHPEFLSRPNRPHPIFKSFIEASLKYQQNK</sequence>
<organism>
    <name type="scientific">Staphylococcus aureus (strain JH1)</name>
    <dbReference type="NCBI Taxonomy" id="359787"/>
    <lineage>
        <taxon>Bacteria</taxon>
        <taxon>Bacillati</taxon>
        <taxon>Bacillota</taxon>
        <taxon>Bacilli</taxon>
        <taxon>Bacillales</taxon>
        <taxon>Staphylococcaceae</taxon>
        <taxon>Staphylococcus</taxon>
    </lineage>
</organism>
<gene>
    <name evidence="1" type="primary">pyrG</name>
    <name type="ordered locus">SaurJH1_2201</name>
</gene>
<evidence type="ECO:0000255" key="1">
    <source>
        <dbReference type="HAMAP-Rule" id="MF_01227"/>
    </source>
</evidence>
<protein>
    <recommendedName>
        <fullName evidence="1">CTP synthase</fullName>
        <ecNumber evidence="1">6.3.4.2</ecNumber>
    </recommendedName>
    <alternativeName>
        <fullName evidence="1">Cytidine 5'-triphosphate synthase</fullName>
    </alternativeName>
    <alternativeName>
        <fullName evidence="1">Cytidine triphosphate synthetase</fullName>
        <shortName evidence="1">CTP synthetase</shortName>
        <shortName evidence="1">CTPS</shortName>
    </alternativeName>
    <alternativeName>
        <fullName evidence="1">UTP--ammonia ligase</fullName>
    </alternativeName>
</protein>
<dbReference type="EC" id="6.3.4.2" evidence="1"/>
<dbReference type="EMBL" id="CP000736">
    <property type="protein sequence ID" value="ABR53030.1"/>
    <property type="molecule type" value="Genomic_DNA"/>
</dbReference>
<dbReference type="SMR" id="A6U3L2"/>
<dbReference type="KEGG" id="sah:SaurJH1_2201"/>
<dbReference type="HOGENOM" id="CLU_011675_5_0_9"/>
<dbReference type="UniPathway" id="UPA00159">
    <property type="reaction ID" value="UER00277"/>
</dbReference>
<dbReference type="GO" id="GO:0005829">
    <property type="term" value="C:cytosol"/>
    <property type="evidence" value="ECO:0007669"/>
    <property type="project" value="TreeGrafter"/>
</dbReference>
<dbReference type="GO" id="GO:0005524">
    <property type="term" value="F:ATP binding"/>
    <property type="evidence" value="ECO:0007669"/>
    <property type="project" value="UniProtKB-KW"/>
</dbReference>
<dbReference type="GO" id="GO:0003883">
    <property type="term" value="F:CTP synthase activity"/>
    <property type="evidence" value="ECO:0007669"/>
    <property type="project" value="UniProtKB-UniRule"/>
</dbReference>
<dbReference type="GO" id="GO:0004359">
    <property type="term" value="F:glutaminase activity"/>
    <property type="evidence" value="ECO:0007669"/>
    <property type="project" value="RHEA"/>
</dbReference>
<dbReference type="GO" id="GO:0042802">
    <property type="term" value="F:identical protein binding"/>
    <property type="evidence" value="ECO:0007669"/>
    <property type="project" value="TreeGrafter"/>
</dbReference>
<dbReference type="GO" id="GO:0046872">
    <property type="term" value="F:metal ion binding"/>
    <property type="evidence" value="ECO:0007669"/>
    <property type="project" value="UniProtKB-KW"/>
</dbReference>
<dbReference type="GO" id="GO:0044210">
    <property type="term" value="P:'de novo' CTP biosynthetic process"/>
    <property type="evidence" value="ECO:0007669"/>
    <property type="project" value="UniProtKB-UniRule"/>
</dbReference>
<dbReference type="GO" id="GO:0019856">
    <property type="term" value="P:pyrimidine nucleobase biosynthetic process"/>
    <property type="evidence" value="ECO:0007669"/>
    <property type="project" value="TreeGrafter"/>
</dbReference>
<dbReference type="CDD" id="cd03113">
    <property type="entry name" value="CTPS_N"/>
    <property type="match status" value="1"/>
</dbReference>
<dbReference type="CDD" id="cd01746">
    <property type="entry name" value="GATase1_CTP_Synthase"/>
    <property type="match status" value="1"/>
</dbReference>
<dbReference type="FunFam" id="3.40.50.300:FF:000009">
    <property type="entry name" value="CTP synthase"/>
    <property type="match status" value="1"/>
</dbReference>
<dbReference type="FunFam" id="3.40.50.880:FF:000002">
    <property type="entry name" value="CTP synthase"/>
    <property type="match status" value="1"/>
</dbReference>
<dbReference type="Gene3D" id="3.40.50.880">
    <property type="match status" value="1"/>
</dbReference>
<dbReference type="Gene3D" id="3.40.50.300">
    <property type="entry name" value="P-loop containing nucleotide triphosphate hydrolases"/>
    <property type="match status" value="1"/>
</dbReference>
<dbReference type="HAMAP" id="MF_01227">
    <property type="entry name" value="PyrG"/>
    <property type="match status" value="1"/>
</dbReference>
<dbReference type="InterPro" id="IPR029062">
    <property type="entry name" value="Class_I_gatase-like"/>
</dbReference>
<dbReference type="InterPro" id="IPR004468">
    <property type="entry name" value="CTP_synthase"/>
</dbReference>
<dbReference type="InterPro" id="IPR017456">
    <property type="entry name" value="CTP_synthase_N"/>
</dbReference>
<dbReference type="InterPro" id="IPR017926">
    <property type="entry name" value="GATASE"/>
</dbReference>
<dbReference type="InterPro" id="IPR033828">
    <property type="entry name" value="GATase1_CTP_Synthase"/>
</dbReference>
<dbReference type="InterPro" id="IPR027417">
    <property type="entry name" value="P-loop_NTPase"/>
</dbReference>
<dbReference type="NCBIfam" id="NF003792">
    <property type="entry name" value="PRK05380.1"/>
    <property type="match status" value="1"/>
</dbReference>
<dbReference type="NCBIfam" id="TIGR00337">
    <property type="entry name" value="PyrG"/>
    <property type="match status" value="1"/>
</dbReference>
<dbReference type="PANTHER" id="PTHR11550">
    <property type="entry name" value="CTP SYNTHASE"/>
    <property type="match status" value="1"/>
</dbReference>
<dbReference type="PANTHER" id="PTHR11550:SF0">
    <property type="entry name" value="CTP SYNTHASE-RELATED"/>
    <property type="match status" value="1"/>
</dbReference>
<dbReference type="Pfam" id="PF06418">
    <property type="entry name" value="CTP_synth_N"/>
    <property type="match status" value="1"/>
</dbReference>
<dbReference type="Pfam" id="PF00117">
    <property type="entry name" value="GATase"/>
    <property type="match status" value="1"/>
</dbReference>
<dbReference type="SUPFAM" id="SSF52317">
    <property type="entry name" value="Class I glutamine amidotransferase-like"/>
    <property type="match status" value="1"/>
</dbReference>
<dbReference type="SUPFAM" id="SSF52540">
    <property type="entry name" value="P-loop containing nucleoside triphosphate hydrolases"/>
    <property type="match status" value="1"/>
</dbReference>
<dbReference type="PROSITE" id="PS51273">
    <property type="entry name" value="GATASE_TYPE_1"/>
    <property type="match status" value="1"/>
</dbReference>
<comment type="function">
    <text evidence="1">Catalyzes the ATP-dependent amination of UTP to CTP with either L-glutamine or ammonia as the source of nitrogen. Regulates intracellular CTP levels through interactions with the four ribonucleotide triphosphates.</text>
</comment>
<comment type="catalytic activity">
    <reaction evidence="1">
        <text>UTP + L-glutamine + ATP + H2O = CTP + L-glutamate + ADP + phosphate + 2 H(+)</text>
        <dbReference type="Rhea" id="RHEA:26426"/>
        <dbReference type="ChEBI" id="CHEBI:15377"/>
        <dbReference type="ChEBI" id="CHEBI:15378"/>
        <dbReference type="ChEBI" id="CHEBI:29985"/>
        <dbReference type="ChEBI" id="CHEBI:30616"/>
        <dbReference type="ChEBI" id="CHEBI:37563"/>
        <dbReference type="ChEBI" id="CHEBI:43474"/>
        <dbReference type="ChEBI" id="CHEBI:46398"/>
        <dbReference type="ChEBI" id="CHEBI:58359"/>
        <dbReference type="ChEBI" id="CHEBI:456216"/>
        <dbReference type="EC" id="6.3.4.2"/>
    </reaction>
</comment>
<comment type="catalytic activity">
    <reaction evidence="1">
        <text>L-glutamine + H2O = L-glutamate + NH4(+)</text>
        <dbReference type="Rhea" id="RHEA:15889"/>
        <dbReference type="ChEBI" id="CHEBI:15377"/>
        <dbReference type="ChEBI" id="CHEBI:28938"/>
        <dbReference type="ChEBI" id="CHEBI:29985"/>
        <dbReference type="ChEBI" id="CHEBI:58359"/>
    </reaction>
</comment>
<comment type="catalytic activity">
    <reaction evidence="1">
        <text>UTP + NH4(+) + ATP = CTP + ADP + phosphate + 2 H(+)</text>
        <dbReference type="Rhea" id="RHEA:16597"/>
        <dbReference type="ChEBI" id="CHEBI:15378"/>
        <dbReference type="ChEBI" id="CHEBI:28938"/>
        <dbReference type="ChEBI" id="CHEBI:30616"/>
        <dbReference type="ChEBI" id="CHEBI:37563"/>
        <dbReference type="ChEBI" id="CHEBI:43474"/>
        <dbReference type="ChEBI" id="CHEBI:46398"/>
        <dbReference type="ChEBI" id="CHEBI:456216"/>
    </reaction>
</comment>
<comment type="activity regulation">
    <text evidence="1">Allosterically activated by GTP, when glutamine is the substrate; GTP has no effect on the reaction when ammonia is the substrate. The allosteric effector GTP functions by stabilizing the protein conformation that binds the tetrahedral intermediate(s) formed during glutamine hydrolysis. Inhibited by the product CTP, via allosteric rather than competitive inhibition.</text>
</comment>
<comment type="pathway">
    <text evidence="1">Pyrimidine metabolism; CTP biosynthesis via de novo pathway; CTP from UDP: step 2/2.</text>
</comment>
<comment type="subunit">
    <text evidence="1">Homotetramer.</text>
</comment>
<comment type="miscellaneous">
    <text evidence="1">CTPSs have evolved a hybrid strategy for distinguishing between UTP and CTP. The overlapping regions of the product feedback inhibitory and substrate sites recognize a common feature in both compounds, the triphosphate moiety. To differentiate isosteric substrate and product pyrimidine rings, an additional pocket far from the expected kinase/ligase catalytic site, specifically recognizes the cytosine and ribose portions of the product inhibitor.</text>
</comment>
<comment type="similarity">
    <text evidence="1">Belongs to the CTP synthase family.</text>
</comment>
<accession>A6U3L2</accession>
<proteinExistence type="inferred from homology"/>
<reference key="1">
    <citation type="submission" date="2007-06" db="EMBL/GenBank/DDBJ databases">
        <title>Complete sequence of chromosome of Staphylococcus aureus subsp. aureus JH1.</title>
        <authorList>
            <consortium name="US DOE Joint Genome Institute"/>
            <person name="Copeland A."/>
            <person name="Lucas S."/>
            <person name="Lapidus A."/>
            <person name="Barry K."/>
            <person name="Detter J.C."/>
            <person name="Glavina del Rio T."/>
            <person name="Hammon N."/>
            <person name="Israni S."/>
            <person name="Dalin E."/>
            <person name="Tice H."/>
            <person name="Pitluck S."/>
            <person name="Chain P."/>
            <person name="Malfatti S."/>
            <person name="Shin M."/>
            <person name="Vergez L."/>
            <person name="Schmutz J."/>
            <person name="Larimer F."/>
            <person name="Land M."/>
            <person name="Hauser L."/>
            <person name="Kyrpides N."/>
            <person name="Ivanova N."/>
            <person name="Tomasz A."/>
            <person name="Richardson P."/>
        </authorList>
    </citation>
    <scope>NUCLEOTIDE SEQUENCE [LARGE SCALE GENOMIC DNA]</scope>
    <source>
        <strain>JH1</strain>
    </source>
</reference>
<feature type="chain" id="PRO_1000139584" description="CTP synthase">
    <location>
        <begin position="1"/>
        <end position="536"/>
    </location>
</feature>
<feature type="domain" description="Glutamine amidotransferase type-1" evidence="1">
    <location>
        <begin position="293"/>
        <end position="535"/>
    </location>
</feature>
<feature type="region of interest" description="Amidoligase domain" evidence="1">
    <location>
        <begin position="1"/>
        <end position="267"/>
    </location>
</feature>
<feature type="active site" description="Nucleophile; for glutamine hydrolysis" evidence="1">
    <location>
        <position position="382"/>
    </location>
</feature>
<feature type="active site" evidence="1">
    <location>
        <position position="508"/>
    </location>
</feature>
<feature type="active site" evidence="1">
    <location>
        <position position="510"/>
    </location>
</feature>
<feature type="binding site" evidence="1">
    <location>
        <position position="13"/>
    </location>
    <ligand>
        <name>CTP</name>
        <dbReference type="ChEBI" id="CHEBI:37563"/>
        <note>allosteric inhibitor</note>
    </ligand>
</feature>
<feature type="binding site" evidence="1">
    <location>
        <position position="13"/>
    </location>
    <ligand>
        <name>UTP</name>
        <dbReference type="ChEBI" id="CHEBI:46398"/>
    </ligand>
</feature>
<feature type="binding site" evidence="1">
    <location>
        <begin position="14"/>
        <end position="19"/>
    </location>
    <ligand>
        <name>ATP</name>
        <dbReference type="ChEBI" id="CHEBI:30616"/>
    </ligand>
</feature>
<feature type="binding site" evidence="1">
    <location>
        <position position="54"/>
    </location>
    <ligand>
        <name>L-glutamine</name>
        <dbReference type="ChEBI" id="CHEBI:58359"/>
    </ligand>
</feature>
<feature type="binding site" evidence="1">
    <location>
        <position position="71"/>
    </location>
    <ligand>
        <name>ATP</name>
        <dbReference type="ChEBI" id="CHEBI:30616"/>
    </ligand>
</feature>
<feature type="binding site" evidence="1">
    <location>
        <position position="71"/>
    </location>
    <ligand>
        <name>Mg(2+)</name>
        <dbReference type="ChEBI" id="CHEBI:18420"/>
    </ligand>
</feature>
<feature type="binding site" evidence="1">
    <location>
        <position position="141"/>
    </location>
    <ligand>
        <name>Mg(2+)</name>
        <dbReference type="ChEBI" id="CHEBI:18420"/>
    </ligand>
</feature>
<feature type="binding site" evidence="1">
    <location>
        <begin position="148"/>
        <end position="150"/>
    </location>
    <ligand>
        <name>CTP</name>
        <dbReference type="ChEBI" id="CHEBI:37563"/>
        <note>allosteric inhibitor</note>
    </ligand>
</feature>
<feature type="binding site" evidence="1">
    <location>
        <begin position="188"/>
        <end position="193"/>
    </location>
    <ligand>
        <name>CTP</name>
        <dbReference type="ChEBI" id="CHEBI:37563"/>
        <note>allosteric inhibitor</note>
    </ligand>
</feature>
<feature type="binding site" evidence="1">
    <location>
        <begin position="188"/>
        <end position="193"/>
    </location>
    <ligand>
        <name>UTP</name>
        <dbReference type="ChEBI" id="CHEBI:46398"/>
    </ligand>
</feature>
<feature type="binding site" evidence="1">
    <location>
        <position position="224"/>
    </location>
    <ligand>
        <name>CTP</name>
        <dbReference type="ChEBI" id="CHEBI:37563"/>
        <note>allosteric inhibitor</note>
    </ligand>
</feature>
<feature type="binding site" evidence="1">
    <location>
        <position position="224"/>
    </location>
    <ligand>
        <name>UTP</name>
        <dbReference type="ChEBI" id="CHEBI:46398"/>
    </ligand>
</feature>
<feature type="binding site" evidence="1">
    <location>
        <begin position="240"/>
        <end position="242"/>
    </location>
    <ligand>
        <name>ATP</name>
        <dbReference type="ChEBI" id="CHEBI:30616"/>
    </ligand>
</feature>
<feature type="binding site" evidence="1">
    <location>
        <position position="355"/>
    </location>
    <ligand>
        <name>L-glutamine</name>
        <dbReference type="ChEBI" id="CHEBI:58359"/>
    </ligand>
</feature>
<feature type="binding site" evidence="1">
    <location>
        <begin position="383"/>
        <end position="386"/>
    </location>
    <ligand>
        <name>L-glutamine</name>
        <dbReference type="ChEBI" id="CHEBI:58359"/>
    </ligand>
</feature>
<feature type="binding site" evidence="1">
    <location>
        <position position="406"/>
    </location>
    <ligand>
        <name>L-glutamine</name>
        <dbReference type="ChEBI" id="CHEBI:58359"/>
    </ligand>
</feature>
<feature type="binding site" evidence="1">
    <location>
        <position position="463"/>
    </location>
    <ligand>
        <name>L-glutamine</name>
        <dbReference type="ChEBI" id="CHEBI:58359"/>
    </ligand>
</feature>
<keyword id="KW-0067">ATP-binding</keyword>
<keyword id="KW-0315">Glutamine amidotransferase</keyword>
<keyword id="KW-0436">Ligase</keyword>
<keyword id="KW-0460">Magnesium</keyword>
<keyword id="KW-0479">Metal-binding</keyword>
<keyword id="KW-0547">Nucleotide-binding</keyword>
<keyword id="KW-0665">Pyrimidine biosynthesis</keyword>
<name>PYRG_STAA2</name>